<keyword id="KW-0007">Acetylation</keyword>
<keyword id="KW-0158">Chromosome</keyword>
<keyword id="KW-0238">DNA-binding</keyword>
<keyword id="KW-0488">Methylation</keyword>
<keyword id="KW-0544">Nucleosome core</keyword>
<keyword id="KW-0539">Nucleus</keyword>
<sequence>MSGRGKGGKGLGKGGAKRHRKVLRDNIQGITKPAIRRLARRGGVKRISGLIYEETRGVLKVFLENVIRDAVTYCEHAKRKTVTAMDVVYALKRQGRTLYGFGG</sequence>
<reference key="1">
    <citation type="journal article" date="1982" name="EMBO J.">
        <title>An unusual evolutionary behaviour of a sea urchin histone gene cluster.</title>
        <authorList>
            <person name="Busslinger M."/>
            <person name="Rusconi S."/>
            <person name="Birnstiel M.L."/>
        </authorList>
    </citation>
    <scope>NUCLEOTIDE SEQUENCE [GENOMIC DNA]</scope>
</reference>
<reference key="2">
    <citation type="submission" date="1998-02" db="EMBL/GenBank/DDBJ databases">
        <title>26S rRNA-complementary sequences in the 3'-UTR of a H4 cDNA from P. lividus eggs.</title>
        <authorList>
            <person name="Bellipanni G."/>
            <person name="Albanese I."/>
        </authorList>
    </citation>
    <scope>NUCLEOTIDE SEQUENCE [GENOMIC DNA]</scope>
    <source>
        <tissue>Ovary</tissue>
        <tissue>Testis</tissue>
    </source>
</reference>
<comment type="function">
    <text>Core component of nucleosome. Nucleosomes wrap and compact DNA into chromatin, limiting DNA accessibility to the cellular machineries which require DNA as a template. Histones thereby play a central role in transcription regulation, DNA repair, DNA replication and chromosomal stability. DNA accessibility is regulated via a complex set of post-translational modifications of histones, also called histone code, and nucleosome remodeling.</text>
</comment>
<comment type="subunit">
    <text>The nucleosome is a histone octamer containing two molecules each of H2A, H2B, H3 and H4 assembled in one H3-H4 heterotetramer and two H2A-H2B heterodimers. The octamer wraps approximately 147 bp of DNA.</text>
</comment>
<comment type="subcellular location">
    <subcellularLocation>
        <location evidence="1">Nucleus</location>
    </subcellularLocation>
    <subcellularLocation>
        <location evidence="1">Chromosome</location>
    </subcellularLocation>
</comment>
<comment type="similarity">
    <text evidence="4">Belongs to the histone H4 family.</text>
</comment>
<organism>
    <name type="scientific">Paracentrotus lividus</name>
    <name type="common">Common sea urchin</name>
    <dbReference type="NCBI Taxonomy" id="7656"/>
    <lineage>
        <taxon>Eukaryota</taxon>
        <taxon>Metazoa</taxon>
        <taxon>Echinodermata</taxon>
        <taxon>Eleutherozoa</taxon>
        <taxon>Echinozoa</taxon>
        <taxon>Echinoidea</taxon>
        <taxon>Euechinoidea</taxon>
        <taxon>Echinacea</taxon>
        <taxon>Camarodonta</taxon>
        <taxon>Echinidea</taxon>
        <taxon>Echinidae</taxon>
        <taxon>Paracentrotus</taxon>
    </lineage>
</organism>
<evidence type="ECO:0000250" key="1"/>
<evidence type="ECO:0000250" key="2">
    <source>
        <dbReference type="UniProtKB" id="P62805"/>
    </source>
</evidence>
<evidence type="ECO:0000256" key="3">
    <source>
        <dbReference type="SAM" id="MobiDB-lite"/>
    </source>
</evidence>
<evidence type="ECO:0000305" key="4"/>
<name>H4_PARLI</name>
<proteinExistence type="inferred from homology"/>
<protein>
    <recommendedName>
        <fullName>Histone H4</fullName>
    </recommendedName>
</protein>
<feature type="initiator methionine" description="Removed" evidence="1">
    <location>
        <position position="1"/>
    </location>
</feature>
<feature type="chain" id="PRO_0000158341" description="Histone H4">
    <location>
        <begin position="2"/>
        <end position="103"/>
    </location>
</feature>
<feature type="DNA-binding region">
    <location>
        <begin position="17"/>
        <end position="21"/>
    </location>
</feature>
<feature type="region of interest" description="Disordered" evidence="3">
    <location>
        <begin position="1"/>
        <end position="20"/>
    </location>
</feature>
<feature type="compositionally biased region" description="Gly residues" evidence="3">
    <location>
        <begin position="1"/>
        <end position="14"/>
    </location>
</feature>
<feature type="modified residue" description="N-acetylserine" evidence="1">
    <location>
        <position position="2"/>
    </location>
</feature>
<feature type="modified residue" description="N6-acetyl-N6-methyllysine; alternate" evidence="2">
    <location>
        <position position="6"/>
    </location>
</feature>
<feature type="modified residue" description="N6-acetyl-N6-methyllysine; alternate" evidence="2">
    <location>
        <position position="13"/>
    </location>
</feature>
<feature type="modified residue" description="N6-acetyllysine" evidence="1">
    <location>
        <position position="17"/>
    </location>
</feature>
<feature type="modified residue" description="N6-methyllysine" evidence="1">
    <location>
        <position position="21"/>
    </location>
</feature>
<dbReference type="EMBL" id="M36923">
    <property type="protein sequence ID" value="AAA69664.1"/>
    <property type="molecule type" value="Genomic_DNA"/>
</dbReference>
<dbReference type="EMBL" id="Y16587">
    <property type="protein sequence ID" value="CAA76306.1"/>
    <property type="molecule type" value="Genomic_DNA"/>
</dbReference>
<dbReference type="EMBL" id="Y16588">
    <property type="protein sequence ID" value="CAA76307.1"/>
    <property type="molecule type" value="Genomic_DNA"/>
</dbReference>
<dbReference type="SMR" id="P62780"/>
<dbReference type="GO" id="GO:0000786">
    <property type="term" value="C:nucleosome"/>
    <property type="evidence" value="ECO:0007669"/>
    <property type="project" value="UniProtKB-KW"/>
</dbReference>
<dbReference type="GO" id="GO:0005634">
    <property type="term" value="C:nucleus"/>
    <property type="evidence" value="ECO:0007669"/>
    <property type="project" value="UniProtKB-SubCell"/>
</dbReference>
<dbReference type="GO" id="GO:0003677">
    <property type="term" value="F:DNA binding"/>
    <property type="evidence" value="ECO:0007669"/>
    <property type="project" value="UniProtKB-KW"/>
</dbReference>
<dbReference type="GO" id="GO:0046982">
    <property type="term" value="F:protein heterodimerization activity"/>
    <property type="evidence" value="ECO:0007669"/>
    <property type="project" value="InterPro"/>
</dbReference>
<dbReference type="GO" id="GO:0030527">
    <property type="term" value="F:structural constituent of chromatin"/>
    <property type="evidence" value="ECO:0007669"/>
    <property type="project" value="InterPro"/>
</dbReference>
<dbReference type="CDD" id="cd22912">
    <property type="entry name" value="HFD_H4"/>
    <property type="match status" value="1"/>
</dbReference>
<dbReference type="FunFam" id="1.10.20.10:FF:000002">
    <property type="entry name" value="Histone H4"/>
    <property type="match status" value="1"/>
</dbReference>
<dbReference type="Gene3D" id="1.10.20.10">
    <property type="entry name" value="Histone, subunit A"/>
    <property type="match status" value="1"/>
</dbReference>
<dbReference type="InterPro" id="IPR035425">
    <property type="entry name" value="CENP-T/H4_C"/>
</dbReference>
<dbReference type="InterPro" id="IPR009072">
    <property type="entry name" value="Histone-fold"/>
</dbReference>
<dbReference type="InterPro" id="IPR001951">
    <property type="entry name" value="Histone_H4"/>
</dbReference>
<dbReference type="InterPro" id="IPR019809">
    <property type="entry name" value="Histone_H4_CS"/>
</dbReference>
<dbReference type="PANTHER" id="PTHR10484">
    <property type="entry name" value="HISTONE H4"/>
    <property type="match status" value="1"/>
</dbReference>
<dbReference type="Pfam" id="PF15511">
    <property type="entry name" value="CENP-T_C"/>
    <property type="match status" value="1"/>
</dbReference>
<dbReference type="PRINTS" id="PR00623">
    <property type="entry name" value="HISTONEH4"/>
</dbReference>
<dbReference type="SMART" id="SM00417">
    <property type="entry name" value="H4"/>
    <property type="match status" value="1"/>
</dbReference>
<dbReference type="SUPFAM" id="SSF47113">
    <property type="entry name" value="Histone-fold"/>
    <property type="match status" value="1"/>
</dbReference>
<dbReference type="PROSITE" id="PS00047">
    <property type="entry name" value="HISTONE_H4"/>
    <property type="match status" value="1"/>
</dbReference>
<accession>P62780</accession>
<accession>O76972</accession>
<accession>P02306</accession>
<accession>P18678</accession>